<keyword id="KW-0002">3D-structure</keyword>
<keyword id="KW-0963">Cytoplasm</keyword>
<keyword id="KW-1185">Reference proteome</keyword>
<keyword id="KW-0687">Ribonucleoprotein</keyword>
<keyword id="KW-0689">Ribosomal protein</keyword>
<keyword id="KW-0694">RNA-binding</keyword>
<keyword id="KW-0699">rRNA-binding</keyword>
<dbReference type="EMBL" id="CP017628">
    <property type="protein sequence ID" value="AOW30133.1"/>
    <property type="molecule type" value="Genomic_DNA"/>
</dbReference>
<dbReference type="RefSeq" id="XP_019331006.1">
    <property type="nucleotide sequence ID" value="XM_019475461.1"/>
</dbReference>
<dbReference type="PDB" id="7PZY">
    <property type="method" value="EM"/>
    <property type="resolution" value="2.32 A"/>
    <property type="chains" value="8=1-142"/>
</dbReference>
<dbReference type="PDB" id="7Q08">
    <property type="method" value="EM"/>
    <property type="resolution" value="2.56 A"/>
    <property type="chains" value="8=1-142"/>
</dbReference>
<dbReference type="PDB" id="7Q0F">
    <property type="method" value="EM"/>
    <property type="resolution" value="2.64 A"/>
    <property type="chains" value="8=1-142"/>
</dbReference>
<dbReference type="PDB" id="7Q0P">
    <property type="method" value="EM"/>
    <property type="resolution" value="2.77 A"/>
    <property type="chains" value="8=1-142"/>
</dbReference>
<dbReference type="PDB" id="7Q0R">
    <property type="method" value="EM"/>
    <property type="resolution" value="2.67 A"/>
    <property type="chains" value="8=1-142"/>
</dbReference>
<dbReference type="PDB" id="8C3A">
    <property type="method" value="X-ray"/>
    <property type="resolution" value="3.00 A"/>
    <property type="chains" value="8/BS=1-142"/>
</dbReference>
<dbReference type="PDB" id="8OGJ">
    <property type="method" value="EM"/>
    <property type="resolution" value="3.10 A"/>
    <property type="chains" value="8=1-142"/>
</dbReference>
<dbReference type="PDB" id="8OH6">
    <property type="method" value="X-ray"/>
    <property type="resolution" value="3.35 A"/>
    <property type="chains" value="8/BS=1-142"/>
</dbReference>
<dbReference type="PDB" id="8OI5">
    <property type="method" value="X-ray"/>
    <property type="resolution" value="2.90 A"/>
    <property type="chains" value="8/BS=1-142"/>
</dbReference>
<dbReference type="PDB" id="8OJ3">
    <property type="method" value="X-ray"/>
    <property type="resolution" value="3.50 A"/>
    <property type="chains" value="8/BS=1-142"/>
</dbReference>
<dbReference type="PDBsum" id="7PZY"/>
<dbReference type="PDBsum" id="7Q08"/>
<dbReference type="PDBsum" id="7Q0F"/>
<dbReference type="PDBsum" id="7Q0P"/>
<dbReference type="PDBsum" id="7Q0R"/>
<dbReference type="PDBsum" id="8C3A"/>
<dbReference type="PDBsum" id="8OGJ"/>
<dbReference type="PDBsum" id="8OH6"/>
<dbReference type="PDBsum" id="8OI5"/>
<dbReference type="PDBsum" id="8OJ3"/>
<dbReference type="EMDB" id="EMD-13737"/>
<dbReference type="EMDB" id="EMD-13741"/>
<dbReference type="EMDB" id="EMD-13744"/>
<dbReference type="EMDB" id="EMD-13749"/>
<dbReference type="EMDB" id="EMD-13750"/>
<dbReference type="SMR" id="A0A1D8PPS1"/>
<dbReference type="FunCoup" id="A0A1D8PPS1">
    <property type="interactions" value="854"/>
</dbReference>
<dbReference type="STRING" id="237561.A0A1D8PPS1"/>
<dbReference type="EnsemblFungi" id="C6_01970C_A-T">
    <property type="protein sequence ID" value="C6_01970C_A-T-p1"/>
    <property type="gene ID" value="C6_01970C_A"/>
</dbReference>
<dbReference type="GeneID" id="30515338"/>
<dbReference type="KEGG" id="cal:CAALFM_C601970CA"/>
<dbReference type="CGD" id="CAL0000200350">
    <property type="gene designation" value="RPL25"/>
</dbReference>
<dbReference type="VEuPathDB" id="FungiDB:C6_01970C_A"/>
<dbReference type="eggNOG" id="KOG1751">
    <property type="taxonomic scope" value="Eukaryota"/>
</dbReference>
<dbReference type="InParanoid" id="A0A1D8PPS1"/>
<dbReference type="OMA" id="RLDHHKV"/>
<dbReference type="OrthoDB" id="1267328at2759"/>
<dbReference type="Proteomes" id="UP000000559">
    <property type="component" value="Chromosome 6"/>
</dbReference>
<dbReference type="GO" id="GO:0022625">
    <property type="term" value="C:cytosolic large ribosomal subunit"/>
    <property type="evidence" value="ECO:0000318"/>
    <property type="project" value="GO_Central"/>
</dbReference>
<dbReference type="GO" id="GO:0019843">
    <property type="term" value="F:rRNA binding"/>
    <property type="evidence" value="ECO:0007669"/>
    <property type="project" value="UniProtKB-KW"/>
</dbReference>
<dbReference type="GO" id="GO:0003735">
    <property type="term" value="F:structural constituent of ribosome"/>
    <property type="evidence" value="ECO:0000318"/>
    <property type="project" value="GO_Central"/>
</dbReference>
<dbReference type="GO" id="GO:0006412">
    <property type="term" value="P:translation"/>
    <property type="evidence" value="ECO:0007669"/>
    <property type="project" value="InterPro"/>
</dbReference>
<dbReference type="FunFam" id="3.30.70.330:FF:000035">
    <property type="entry name" value="60S ribosomal protein L23a"/>
    <property type="match status" value="1"/>
</dbReference>
<dbReference type="Gene3D" id="3.30.70.330">
    <property type="match status" value="1"/>
</dbReference>
<dbReference type="HAMAP" id="MF_01369_A">
    <property type="entry name" value="Ribosomal_uL23_A"/>
    <property type="match status" value="1"/>
</dbReference>
<dbReference type="InterPro" id="IPR012677">
    <property type="entry name" value="Nucleotide-bd_a/b_plait_sf"/>
</dbReference>
<dbReference type="InterPro" id="IPR013025">
    <property type="entry name" value="Ribosomal_uL23-like"/>
</dbReference>
<dbReference type="InterPro" id="IPR012678">
    <property type="entry name" value="Ribosomal_uL23/eL15/eS24_sf"/>
</dbReference>
<dbReference type="InterPro" id="IPR001014">
    <property type="entry name" value="Ribosomal_uL23_CS"/>
</dbReference>
<dbReference type="InterPro" id="IPR005633">
    <property type="entry name" value="Ribosomal_uL23_N"/>
</dbReference>
<dbReference type="NCBIfam" id="NF011118">
    <property type="entry name" value="PRK14548.1"/>
    <property type="match status" value="1"/>
</dbReference>
<dbReference type="PANTHER" id="PTHR11620">
    <property type="entry name" value="60S RIBOSOMAL PROTEIN L23A"/>
    <property type="match status" value="1"/>
</dbReference>
<dbReference type="Pfam" id="PF00276">
    <property type="entry name" value="Ribosomal_L23"/>
    <property type="match status" value="1"/>
</dbReference>
<dbReference type="Pfam" id="PF03939">
    <property type="entry name" value="Ribosomal_L23eN"/>
    <property type="match status" value="1"/>
</dbReference>
<dbReference type="SUPFAM" id="SSF54189">
    <property type="entry name" value="Ribosomal proteins S24e, L23 and L15e"/>
    <property type="match status" value="1"/>
</dbReference>
<dbReference type="PROSITE" id="PS00050">
    <property type="entry name" value="RIBOSOMAL_L23"/>
    <property type="match status" value="1"/>
</dbReference>
<proteinExistence type="evidence at protein level"/>
<protein>
    <recommendedName>
        <fullName evidence="3">Large ribosomal subunit protein uL23</fullName>
    </recommendedName>
    <alternativeName>
        <fullName>60S ribosomal protein L25</fullName>
    </alternativeName>
</protein>
<organism>
    <name type="scientific">Candida albicans (strain SC5314 / ATCC MYA-2876)</name>
    <name type="common">Yeast</name>
    <dbReference type="NCBI Taxonomy" id="237561"/>
    <lineage>
        <taxon>Eukaryota</taxon>
        <taxon>Fungi</taxon>
        <taxon>Dikarya</taxon>
        <taxon>Ascomycota</taxon>
        <taxon>Saccharomycotina</taxon>
        <taxon>Pichiomycetes</taxon>
        <taxon>Debaryomycetaceae</taxon>
        <taxon>Candida/Lodderomyces clade</taxon>
        <taxon>Candida</taxon>
    </lineage>
</organism>
<name>RL25_CANAL</name>
<gene>
    <name evidence="3" type="primary">RPL25</name>
    <name type="ordered locus">orf19.687.1</name>
    <name type="ORF">CAALFM_C601970CA</name>
</gene>
<accession>A0A1D8PPS1</accession>
<reference key="1">
    <citation type="journal article" date="2004" name="Proc. Natl. Acad. Sci. U.S.A.">
        <title>The diploid genome sequence of Candida albicans.</title>
        <authorList>
            <person name="Jones T."/>
            <person name="Federspiel N.A."/>
            <person name="Chibana H."/>
            <person name="Dungan J."/>
            <person name="Kalman S."/>
            <person name="Magee B.B."/>
            <person name="Newport G."/>
            <person name="Thorstenson Y.R."/>
            <person name="Agabian N."/>
            <person name="Magee P.T."/>
            <person name="Davis R.W."/>
            <person name="Scherer S."/>
        </authorList>
    </citation>
    <scope>NUCLEOTIDE SEQUENCE [LARGE SCALE GENOMIC DNA]</scope>
    <source>
        <strain>SC5314 / ATCC MYA-2876</strain>
    </source>
</reference>
<reference key="2">
    <citation type="journal article" date="2007" name="Genome Biol.">
        <title>Assembly of the Candida albicans genome into sixteen supercontigs aligned on the eight chromosomes.</title>
        <authorList>
            <person name="van het Hoog M."/>
            <person name="Rast T.J."/>
            <person name="Martchenko M."/>
            <person name="Grindle S."/>
            <person name="Dignard D."/>
            <person name="Hogues H."/>
            <person name="Cuomo C."/>
            <person name="Berriman M."/>
            <person name="Scherer S."/>
            <person name="Magee B.B."/>
            <person name="Whiteway M."/>
            <person name="Chibana H."/>
            <person name="Nantel A."/>
            <person name="Magee P.T."/>
        </authorList>
    </citation>
    <scope>GENOME REANNOTATION</scope>
    <source>
        <strain>SC5314 / ATCC MYA-2876</strain>
    </source>
</reference>
<reference key="3">
    <citation type="journal article" date="2013" name="Genome Biol.">
        <title>Assembly of a phased diploid Candida albicans genome facilitates allele-specific measurements and provides a simple model for repeat and indel structure.</title>
        <authorList>
            <person name="Muzzey D."/>
            <person name="Schwartz K."/>
            <person name="Weissman J.S."/>
            <person name="Sherlock G."/>
        </authorList>
    </citation>
    <scope>NUCLEOTIDE SEQUENCE [LARGE SCALE GENOMIC DNA]</scope>
    <scope>GENOME REANNOTATION</scope>
    <source>
        <strain>SC5314 / ATCC MYA-2876</strain>
    </source>
</reference>
<reference evidence="6 7 8" key="4">
    <citation type="journal article" date="2022" name="Sci. Adv.">
        <title>E-site drug specificity of the human pathogen Candida albicans ribosome.</title>
        <authorList>
            <person name="Zgadzay Y."/>
            <person name="Kolosova O."/>
            <person name="Stetsenko A."/>
            <person name="Wu C."/>
            <person name="Bruchlen D."/>
            <person name="Usachev K."/>
            <person name="Validov S."/>
            <person name="Jenner L."/>
            <person name="Rogachev A."/>
            <person name="Yusupova G."/>
            <person name="Sachs M.S."/>
            <person name="Guskov A."/>
            <person name="Yusupov M."/>
        </authorList>
    </citation>
    <scope>STRUCTURE BY ELECTRON MICROSCOPY (2.32 ANGSTROMS) OF THE 80S RIBOSOME</scope>
    <scope>SUBUNIT</scope>
</reference>
<evidence type="ECO:0000250" key="1">
    <source>
        <dbReference type="UniProtKB" id="P04456"/>
    </source>
</evidence>
<evidence type="ECO:0000269" key="2">
    <source>
    </source>
</evidence>
<evidence type="ECO:0000303" key="3">
    <source>
    </source>
</evidence>
<evidence type="ECO:0000305" key="4"/>
<evidence type="ECO:0000305" key="5">
    <source>
    </source>
</evidence>
<evidence type="ECO:0007744" key="6">
    <source>
        <dbReference type="PDB" id="7PZY"/>
    </source>
</evidence>
<evidence type="ECO:0007744" key="7">
    <source>
        <dbReference type="PDB" id="7Q0F"/>
    </source>
</evidence>
<evidence type="ECO:0007744" key="8">
    <source>
        <dbReference type="PDB" id="7Q0P"/>
    </source>
</evidence>
<sequence length="142" mass="15843">MAPTTKASAAKKAALKGVNGKKALKVRTSTTFRLPKTLKLTRSPKYQRKSVPHYNRLDAHKIIVAPIATETAMKKVEDGNTLVFQVDIKSNKHQIKSAVKELYDVDALYVNTLIRPNGTKKAYIRLTSDYDALDIANRIGYI</sequence>
<feature type="chain" id="PRO_0000456512" description="Large ribosomal subunit protein uL23">
    <location>
        <begin position="1"/>
        <end position="142"/>
    </location>
</feature>
<comment type="function">
    <text evidence="1 5">Component of the ribosome, a large ribonucleoprotein complex responsible for the synthesis of proteins in the cell. The small ribosomal subunit (SSU) binds messenger RNAs (mRNAs) and translates the encoded message by selecting cognate aminoacyl-transfer RNA (tRNA) molecules. The large subunit (LSU) contains the ribosomal catalytic site termed the peptidyl transferase center (PTC), which catalyzes the formation of peptide bonds, thereby polymerizing the amino acids delivered by tRNAs into a polypeptide chain. The nascent polypeptides leave the ribosome through a tunnel in the LSU and interact with protein factors that function in enzymatic processing, targeting, and the membrane insertion of nascent chains at the exit of the ribosomal tunnel (Probable). RPL25 is a major component of the universal docking site for these factors at the polypeptide exit tunnel (By similarity).</text>
</comment>
<comment type="subunit">
    <text evidence="2">Component of the large ribosomal subunit (PubMed:35613268). Mature ribosomes consist of a small (40S) and a large (60S) subunit (PubMed:35613268). The 40S subunit contains about 32 different proteins and 1 molecule of RNA (18S) (PubMed:35613268). The 60S subunit contains 45 different proteins and 3 molecules of RNA (25S, 5.8S and 5S) (PubMed:35613268).</text>
</comment>
<comment type="subcellular location">
    <subcellularLocation>
        <location evidence="5">Cytoplasm</location>
    </subcellularLocation>
</comment>
<comment type="similarity">
    <text evidence="4">Belongs to the universal ribosomal protein uL23 family.</text>
</comment>